<dbReference type="EMBL" id="CP000682">
    <property type="protein sequence ID" value="ABP96382.1"/>
    <property type="molecule type" value="Genomic_DNA"/>
</dbReference>
<dbReference type="RefSeq" id="WP_012022169.1">
    <property type="nucleotide sequence ID" value="NZ_CP139956.1"/>
</dbReference>
<dbReference type="SMR" id="A4YIY0"/>
<dbReference type="STRING" id="399549.Msed_2244"/>
<dbReference type="KEGG" id="mse:Msed_2244"/>
<dbReference type="eggNOG" id="arCOG01946">
    <property type="taxonomic scope" value="Archaea"/>
</dbReference>
<dbReference type="HOGENOM" id="CLU_1275302_0_0_2"/>
<dbReference type="Proteomes" id="UP000000242">
    <property type="component" value="Chromosome"/>
</dbReference>
<dbReference type="GO" id="GO:1990904">
    <property type="term" value="C:ribonucleoprotein complex"/>
    <property type="evidence" value="ECO:0007669"/>
    <property type="project" value="UniProtKB-KW"/>
</dbReference>
<dbReference type="GO" id="GO:0005840">
    <property type="term" value="C:ribosome"/>
    <property type="evidence" value="ECO:0007669"/>
    <property type="project" value="UniProtKB-KW"/>
</dbReference>
<dbReference type="GO" id="GO:0003735">
    <property type="term" value="F:structural constituent of ribosome"/>
    <property type="evidence" value="ECO:0007669"/>
    <property type="project" value="InterPro"/>
</dbReference>
<dbReference type="GO" id="GO:0006412">
    <property type="term" value="P:translation"/>
    <property type="evidence" value="ECO:0007669"/>
    <property type="project" value="UniProtKB-UniRule"/>
</dbReference>
<dbReference type="HAMAP" id="MF_00512">
    <property type="entry name" value="Ribosomal_eS6"/>
    <property type="match status" value="1"/>
</dbReference>
<dbReference type="InterPro" id="IPR001377">
    <property type="entry name" value="Ribosomal_eS6"/>
</dbReference>
<dbReference type="InterPro" id="IPR020924">
    <property type="entry name" value="Ribosomal_eS6_arc"/>
</dbReference>
<dbReference type="InterPro" id="IPR018282">
    <property type="entry name" value="Ribosomal_eS6_CS"/>
</dbReference>
<dbReference type="NCBIfam" id="NF003292">
    <property type="entry name" value="PRK04290.1-1"/>
    <property type="match status" value="1"/>
</dbReference>
<dbReference type="PANTHER" id="PTHR11502">
    <property type="entry name" value="40S RIBOSOMAL PROTEIN S6"/>
    <property type="match status" value="1"/>
</dbReference>
<dbReference type="Pfam" id="PF01092">
    <property type="entry name" value="Ribosomal_S6e"/>
    <property type="match status" value="1"/>
</dbReference>
<dbReference type="SMART" id="SM01405">
    <property type="entry name" value="Ribosomal_S6e"/>
    <property type="match status" value="1"/>
</dbReference>
<dbReference type="PROSITE" id="PS00578">
    <property type="entry name" value="RIBOSOMAL_S6E"/>
    <property type="match status" value="1"/>
</dbReference>
<reference key="1">
    <citation type="journal article" date="2008" name="Appl. Environ. Microbiol.">
        <title>The genome sequence of the metal-mobilizing, extremely thermoacidophilic archaeon Metallosphaera sedula provides insights into bioleaching-associated metabolism.</title>
        <authorList>
            <person name="Auernik K.S."/>
            <person name="Maezato Y."/>
            <person name="Blum P.H."/>
            <person name="Kelly R.M."/>
        </authorList>
    </citation>
    <scope>NUCLEOTIDE SEQUENCE [LARGE SCALE GENOMIC DNA]</scope>
    <source>
        <strain>ATCC 51363 / DSM 5348 / JCM 9185 / NBRC 15509 / TH2</strain>
    </source>
</reference>
<accession>A4YIY0</accession>
<comment type="similarity">
    <text evidence="1">Belongs to the eukaryotic ribosomal protein eS6 family.</text>
</comment>
<organism>
    <name type="scientific">Metallosphaera sedula (strain ATCC 51363 / DSM 5348 / JCM 9185 / NBRC 15509 / TH2)</name>
    <dbReference type="NCBI Taxonomy" id="399549"/>
    <lineage>
        <taxon>Archaea</taxon>
        <taxon>Thermoproteota</taxon>
        <taxon>Thermoprotei</taxon>
        <taxon>Sulfolobales</taxon>
        <taxon>Sulfolobaceae</taxon>
        <taxon>Metallosphaera</taxon>
    </lineage>
</organism>
<evidence type="ECO:0000255" key="1">
    <source>
        <dbReference type="HAMAP-Rule" id="MF_00512"/>
    </source>
</evidence>
<evidence type="ECO:0000305" key="2"/>
<protein>
    <recommendedName>
        <fullName evidence="1">Small ribosomal subunit protein eS6</fullName>
    </recommendedName>
    <alternativeName>
        <fullName evidence="2">30S ribosomal protein S6e</fullName>
    </alternativeName>
</protein>
<feature type="chain" id="PRO_1000072472" description="Small ribosomal subunit protein eS6">
    <location>
        <begin position="1"/>
        <end position="212"/>
    </location>
</feature>
<gene>
    <name evidence="1" type="primary">rps6e</name>
    <name type="ordered locus">Msed_2244</name>
</gene>
<proteinExistence type="inferred from homology"/>
<keyword id="KW-1185">Reference proteome</keyword>
<keyword id="KW-0687">Ribonucleoprotein</keyword>
<keyword id="KW-0689">Ribosomal protein</keyword>
<sequence>MADFKIVISDPASKKVVPAKVKVKLVDNVQSEEGEKEGRTLPVCLVNPKTKEKLGADQFITVEIQKQEGDKKVKVKVHFIARESAEVPEGEIHASKGLTEKFGAEEFEAVAYRTKSFQLNVDQGQVNLVGSKIGDNFTLSVGGIALNLAITGGSDNTGFPMRPDVQGAAKRRILLAGPPGFIPTEDGERRRKIVRGNVISAENVQINCVIVR</sequence>
<name>RS6E_METS5</name>